<organism>
    <name type="scientific">Macaca fascicularis</name>
    <name type="common">Crab-eating macaque</name>
    <name type="synonym">Cynomolgus monkey</name>
    <dbReference type="NCBI Taxonomy" id="9541"/>
    <lineage>
        <taxon>Eukaryota</taxon>
        <taxon>Metazoa</taxon>
        <taxon>Chordata</taxon>
        <taxon>Craniata</taxon>
        <taxon>Vertebrata</taxon>
        <taxon>Euteleostomi</taxon>
        <taxon>Mammalia</taxon>
        <taxon>Eutheria</taxon>
        <taxon>Euarchontoglires</taxon>
        <taxon>Primates</taxon>
        <taxon>Haplorrhini</taxon>
        <taxon>Catarrhini</taxon>
        <taxon>Cercopithecidae</taxon>
        <taxon>Cercopithecinae</taxon>
        <taxon>Macaca</taxon>
    </lineage>
</organism>
<feature type="chain" id="PRO_0000190448" description="Ribonucleoside-diphosphate reductase subunit M2">
    <location>
        <begin position="1"/>
        <end position="389"/>
    </location>
</feature>
<feature type="short sequence motif" description="Cy" evidence="3">
    <location>
        <begin position="49"/>
        <end position="51"/>
    </location>
</feature>
<feature type="active site" evidence="4">
    <location>
        <position position="176"/>
    </location>
</feature>
<feature type="binding site" evidence="4">
    <location>
        <position position="138"/>
    </location>
    <ligand>
        <name>Fe cation</name>
        <dbReference type="ChEBI" id="CHEBI:24875"/>
        <label>1</label>
    </ligand>
</feature>
<feature type="binding site" evidence="4">
    <location>
        <position position="169"/>
    </location>
    <ligand>
        <name>Fe cation</name>
        <dbReference type="ChEBI" id="CHEBI:24875"/>
        <label>1</label>
    </ligand>
</feature>
<feature type="binding site" evidence="1">
    <location>
        <position position="169"/>
    </location>
    <ligand>
        <name>Fe cation</name>
        <dbReference type="ChEBI" id="CHEBI:24875"/>
        <label>2</label>
    </ligand>
</feature>
<feature type="binding site" evidence="4">
    <location>
        <position position="172"/>
    </location>
    <ligand>
        <name>Fe cation</name>
        <dbReference type="ChEBI" id="CHEBI:24875"/>
        <label>1</label>
    </ligand>
</feature>
<feature type="binding site" evidence="1">
    <location>
        <position position="232"/>
    </location>
    <ligand>
        <name>Fe cation</name>
        <dbReference type="ChEBI" id="CHEBI:24875"/>
        <label>2</label>
    </ligand>
</feature>
<feature type="binding site" evidence="1">
    <location>
        <position position="266"/>
    </location>
    <ligand>
        <name>Fe cation</name>
        <dbReference type="ChEBI" id="CHEBI:24875"/>
        <label>2</label>
    </ligand>
</feature>
<feature type="binding site" evidence="1">
    <location>
        <position position="269"/>
    </location>
    <ligand>
        <name>Fe cation</name>
        <dbReference type="ChEBI" id="CHEBI:24875"/>
        <label>2</label>
    </ligand>
</feature>
<feature type="modified residue" description="Phosphoserine" evidence="2">
    <location>
        <position position="20"/>
    </location>
</feature>
<feature type="modified residue" description="Phosphothreonine" evidence="2">
    <location>
        <position position="33"/>
    </location>
</feature>
<accession>Q4R7Q7</accession>
<proteinExistence type="evidence at transcript level"/>
<keyword id="KW-0963">Cytoplasm</keyword>
<keyword id="KW-0215">Deoxyribonucleotide synthesis</keyword>
<keyword id="KW-0408">Iron</keyword>
<keyword id="KW-0479">Metal-binding</keyword>
<keyword id="KW-0539">Nucleus</keyword>
<keyword id="KW-0560">Oxidoreductase</keyword>
<keyword id="KW-0597">Phosphoprotein</keyword>
<keyword id="KW-1185">Reference proteome</keyword>
<keyword id="KW-0832">Ubl conjugation</keyword>
<sequence length="389" mass="44804">MLSVRIPLAPITNPQQLQLSPLKGLSLVDKENTPPALSGARVLASKTARRIFQEPAEPKTKAAAPGVEDEPLLRENPRRFVIFPIEYHDIWQMYKKAEASFWTAEEVDLSKDIQHWESLKPEERYFISHVLAFFAASDGIVNENLVERFSQEVQITEARCFYGFQIAMENIHSEMYSLLIDTYIKDPKEREFLFNAIETMPCVEKKADWALRWIGDKEATYGERVVAFAAVEGIFFSGSFASIFWLKKRGLMPGLTFSNELISRDEGLHCDFACLMFKHLVHKPSEERVREIIINAVRVEQEFLTEALPVKLIGMNCTLMKQYIEFVADRLMLELGFSKVFRVENPFDFMENISLEGKTNFFEKRVGEYQRMGVMSSPTENSFTLDADF</sequence>
<gene>
    <name type="primary">RRM2</name>
    <name type="ORF">QtsA-14617</name>
</gene>
<name>RIR2_MACFA</name>
<reference key="1">
    <citation type="submission" date="2005-06" db="EMBL/GenBank/DDBJ databases">
        <title>DNA sequences of macaque genes expressed in brain or testis and its evolutionary implications.</title>
        <authorList>
            <consortium name="International consortium for macaque cDNA sequencing and analysis"/>
        </authorList>
    </citation>
    <scope>NUCLEOTIDE SEQUENCE [LARGE SCALE MRNA]</scope>
    <source>
        <tissue>Testis</tissue>
    </source>
</reference>
<evidence type="ECO:0000250" key="1"/>
<evidence type="ECO:0000250" key="2">
    <source>
        <dbReference type="UniProtKB" id="P11157"/>
    </source>
</evidence>
<evidence type="ECO:0000250" key="3">
    <source>
        <dbReference type="UniProtKB" id="P31350"/>
    </source>
</evidence>
<evidence type="ECO:0000255" key="4">
    <source>
        <dbReference type="PROSITE-ProRule" id="PRU10014"/>
    </source>
</evidence>
<evidence type="ECO:0000305" key="5"/>
<protein>
    <recommendedName>
        <fullName>Ribonucleoside-diphosphate reductase subunit M2</fullName>
        <ecNumber>1.17.4.1</ecNumber>
    </recommendedName>
    <alternativeName>
        <fullName>Ribonucleotide reductase small chain</fullName>
    </alternativeName>
    <alternativeName>
        <fullName>Ribonucleotide reductase small subunit</fullName>
    </alternativeName>
</protein>
<dbReference type="EC" id="1.17.4.1"/>
<dbReference type="EMBL" id="AB168758">
    <property type="protein sequence ID" value="BAE00865.1"/>
    <property type="molecule type" value="mRNA"/>
</dbReference>
<dbReference type="RefSeq" id="NP_001271095.1">
    <property type="nucleotide sequence ID" value="NM_001284166.1"/>
</dbReference>
<dbReference type="SMR" id="Q4R7Q7"/>
<dbReference type="STRING" id="9541.ENSMFAP00000003161"/>
<dbReference type="eggNOG" id="KOG1567">
    <property type="taxonomic scope" value="Eukaryota"/>
</dbReference>
<dbReference type="Proteomes" id="UP000233100">
    <property type="component" value="Unplaced"/>
</dbReference>
<dbReference type="GO" id="GO:0005829">
    <property type="term" value="C:cytosol"/>
    <property type="evidence" value="ECO:0007669"/>
    <property type="project" value="TreeGrafter"/>
</dbReference>
<dbReference type="GO" id="GO:0005634">
    <property type="term" value="C:nucleus"/>
    <property type="evidence" value="ECO:0007669"/>
    <property type="project" value="UniProtKB-SubCell"/>
</dbReference>
<dbReference type="GO" id="GO:0046872">
    <property type="term" value="F:metal ion binding"/>
    <property type="evidence" value="ECO:0007669"/>
    <property type="project" value="UniProtKB-KW"/>
</dbReference>
<dbReference type="GO" id="GO:0004748">
    <property type="term" value="F:ribonucleoside-diphosphate reductase activity, thioredoxin disulfide as acceptor"/>
    <property type="evidence" value="ECO:0000250"/>
    <property type="project" value="UniProtKB"/>
</dbReference>
<dbReference type="GO" id="GO:0009263">
    <property type="term" value="P:deoxyribonucleotide biosynthetic process"/>
    <property type="evidence" value="ECO:0000250"/>
    <property type="project" value="UniProtKB"/>
</dbReference>
<dbReference type="CDD" id="cd01049">
    <property type="entry name" value="RNRR2"/>
    <property type="match status" value="1"/>
</dbReference>
<dbReference type="FunFam" id="1.10.620.20:FF:000004">
    <property type="entry name" value="Ribonucleoside-diphosphate reductase subunit M2 B"/>
    <property type="match status" value="1"/>
</dbReference>
<dbReference type="Gene3D" id="1.10.620.20">
    <property type="entry name" value="Ribonucleotide Reductase, subunit A"/>
    <property type="match status" value="1"/>
</dbReference>
<dbReference type="InterPro" id="IPR009078">
    <property type="entry name" value="Ferritin-like_SF"/>
</dbReference>
<dbReference type="InterPro" id="IPR012348">
    <property type="entry name" value="RNR-like"/>
</dbReference>
<dbReference type="InterPro" id="IPR033909">
    <property type="entry name" value="RNR_small"/>
</dbReference>
<dbReference type="InterPro" id="IPR030475">
    <property type="entry name" value="RNR_small_AS"/>
</dbReference>
<dbReference type="InterPro" id="IPR000358">
    <property type="entry name" value="RNR_small_fam"/>
</dbReference>
<dbReference type="PANTHER" id="PTHR23409">
    <property type="entry name" value="RIBONUCLEOSIDE-DIPHOSPHATE REDUCTASE SMALL CHAIN"/>
    <property type="match status" value="1"/>
</dbReference>
<dbReference type="PANTHER" id="PTHR23409:SF20">
    <property type="entry name" value="RIBONUCLEOSIDE-DIPHOSPHATE REDUCTASE SUBUNIT M2"/>
    <property type="match status" value="1"/>
</dbReference>
<dbReference type="Pfam" id="PF00268">
    <property type="entry name" value="Ribonuc_red_sm"/>
    <property type="match status" value="1"/>
</dbReference>
<dbReference type="SUPFAM" id="SSF47240">
    <property type="entry name" value="Ferritin-like"/>
    <property type="match status" value="1"/>
</dbReference>
<dbReference type="PROSITE" id="PS00368">
    <property type="entry name" value="RIBORED_SMALL"/>
    <property type="match status" value="1"/>
</dbReference>
<comment type="function">
    <text evidence="1">Provides the precursors necessary for DNA synthesis. Catalyzes the biosynthesis of deoxyribonucleotides from the corresponding ribonucleotides (By similarity). Inhibits Wnt signaling (By similarity).</text>
</comment>
<comment type="catalytic activity">
    <reaction evidence="4">
        <text>a 2'-deoxyribonucleoside 5'-diphosphate + [thioredoxin]-disulfide + H2O = a ribonucleoside 5'-diphosphate + [thioredoxin]-dithiol</text>
        <dbReference type="Rhea" id="RHEA:23252"/>
        <dbReference type="Rhea" id="RHEA-COMP:10698"/>
        <dbReference type="Rhea" id="RHEA-COMP:10700"/>
        <dbReference type="ChEBI" id="CHEBI:15377"/>
        <dbReference type="ChEBI" id="CHEBI:29950"/>
        <dbReference type="ChEBI" id="CHEBI:50058"/>
        <dbReference type="ChEBI" id="CHEBI:57930"/>
        <dbReference type="ChEBI" id="CHEBI:73316"/>
        <dbReference type="EC" id="1.17.4.1"/>
    </reaction>
</comment>
<comment type="cofactor">
    <cofactor evidence="1">
        <name>Fe cation</name>
        <dbReference type="ChEBI" id="CHEBI:24875"/>
    </cofactor>
    <text evidence="1">Binds 2 iron ions per subunit.</text>
</comment>
<comment type="subunit">
    <text evidence="3">Heterodimer of a large and a small subunit. Interacts (via Cy motif and when phosphorylated at Thr-33) with CCNF; the interaction occurs exclusively in G2 and early M (By similarity).</text>
</comment>
<comment type="subcellular location">
    <subcellularLocation>
        <location evidence="3">Cytoplasm</location>
    </subcellularLocation>
    <subcellularLocation>
        <location evidence="3">Nucleus</location>
    </subcellularLocation>
    <text evidence="3">Localized to the cytoplasm in S phase cells. May localize to the nucleus in G2 phase cells.</text>
</comment>
<comment type="PTM">
    <text evidence="3">Phosphorylation on Ser-20 relieves the inhibitory effect on Wnt signaling (By similarity). Phosphorylated on Thr-33 by CDK1 and CDK2; predominantly in G2 and M phase (By similarity).</text>
</comment>
<comment type="PTM">
    <text evidence="3">Ubiquitinated by the SCF(CCNF) E3 ubiquitin-protein ligase complex; leading to its degradation by the proteasome.</text>
</comment>
<comment type="miscellaneous">
    <text evidence="1">Two distinct regulatory sites have been defined: the specificity site, which controls substrate specificity, and the activity site which regulates overall catalytic activity. A substrate-binding catalytic site, located on M1, is formed only in the presence of the second subunit M2 (By similarity).</text>
</comment>
<comment type="similarity">
    <text evidence="5">Belongs to the ribonucleoside diphosphate reductase small chain family.</text>
</comment>